<comment type="function">
    <text evidence="1">Specifically methylates position 2 of adenine 2503 in 23S rRNA and position 2 of adenine 37 in tRNAs. Confers resistance to some classes of antibiotics.</text>
</comment>
<comment type="catalytic activity">
    <reaction evidence="1">
        <text>adenosine(2503) in 23S rRNA + 2 reduced [2Fe-2S]-[ferredoxin] + 2 S-adenosyl-L-methionine = 2-methyladenosine(2503) in 23S rRNA + 5'-deoxyadenosine + L-methionine + 2 oxidized [2Fe-2S]-[ferredoxin] + S-adenosyl-L-homocysteine</text>
        <dbReference type="Rhea" id="RHEA:42916"/>
        <dbReference type="Rhea" id="RHEA-COMP:10000"/>
        <dbReference type="Rhea" id="RHEA-COMP:10001"/>
        <dbReference type="Rhea" id="RHEA-COMP:10152"/>
        <dbReference type="Rhea" id="RHEA-COMP:10282"/>
        <dbReference type="ChEBI" id="CHEBI:17319"/>
        <dbReference type="ChEBI" id="CHEBI:33737"/>
        <dbReference type="ChEBI" id="CHEBI:33738"/>
        <dbReference type="ChEBI" id="CHEBI:57844"/>
        <dbReference type="ChEBI" id="CHEBI:57856"/>
        <dbReference type="ChEBI" id="CHEBI:59789"/>
        <dbReference type="ChEBI" id="CHEBI:74411"/>
        <dbReference type="ChEBI" id="CHEBI:74497"/>
        <dbReference type="EC" id="2.1.1.192"/>
    </reaction>
</comment>
<comment type="catalytic activity">
    <reaction evidence="1">
        <text>adenosine(37) in tRNA + 2 reduced [2Fe-2S]-[ferredoxin] + 2 S-adenosyl-L-methionine = 2-methyladenosine(37) in tRNA + 5'-deoxyadenosine + L-methionine + 2 oxidized [2Fe-2S]-[ferredoxin] + S-adenosyl-L-homocysteine</text>
        <dbReference type="Rhea" id="RHEA:43332"/>
        <dbReference type="Rhea" id="RHEA-COMP:10000"/>
        <dbReference type="Rhea" id="RHEA-COMP:10001"/>
        <dbReference type="Rhea" id="RHEA-COMP:10162"/>
        <dbReference type="Rhea" id="RHEA-COMP:10485"/>
        <dbReference type="ChEBI" id="CHEBI:17319"/>
        <dbReference type="ChEBI" id="CHEBI:33737"/>
        <dbReference type="ChEBI" id="CHEBI:33738"/>
        <dbReference type="ChEBI" id="CHEBI:57844"/>
        <dbReference type="ChEBI" id="CHEBI:57856"/>
        <dbReference type="ChEBI" id="CHEBI:59789"/>
        <dbReference type="ChEBI" id="CHEBI:74411"/>
        <dbReference type="ChEBI" id="CHEBI:74497"/>
        <dbReference type="EC" id="2.1.1.192"/>
    </reaction>
</comment>
<comment type="cofactor">
    <cofactor evidence="1">
        <name>[4Fe-4S] cluster</name>
        <dbReference type="ChEBI" id="CHEBI:49883"/>
    </cofactor>
    <text evidence="1">Binds 1 [4Fe-4S] cluster. The cluster is coordinated with 3 cysteines and an exchangeable S-adenosyl-L-methionine.</text>
</comment>
<comment type="subcellular location">
    <subcellularLocation>
        <location evidence="1">Cytoplasm</location>
    </subcellularLocation>
</comment>
<comment type="miscellaneous">
    <text evidence="1">Reaction proceeds by a ping-pong mechanism involving intermediate methylation of a conserved cysteine residue.</text>
</comment>
<comment type="similarity">
    <text evidence="1">Belongs to the radical SAM superfamily. RlmN family.</text>
</comment>
<accession>Q8NX16</accession>
<name>RLMN_STAAW</name>
<gene>
    <name evidence="1" type="primary">rlmN</name>
    <name type="ordered locus">MW1101</name>
</gene>
<feature type="chain" id="PRO_0000350435" description="Probable dual-specificity RNA methyltransferase RlmN">
    <location>
        <begin position="1"/>
        <end position="364"/>
    </location>
</feature>
<feature type="domain" description="Radical SAM core" evidence="2">
    <location>
        <begin position="113"/>
        <end position="346"/>
    </location>
</feature>
<feature type="active site" description="Proton acceptor" evidence="1">
    <location>
        <position position="107"/>
    </location>
</feature>
<feature type="active site" description="S-methylcysteine intermediate" evidence="1">
    <location>
        <position position="351"/>
    </location>
</feature>
<feature type="binding site" evidence="1">
    <location>
        <position position="127"/>
    </location>
    <ligand>
        <name>[4Fe-4S] cluster</name>
        <dbReference type="ChEBI" id="CHEBI:49883"/>
        <note>4Fe-4S-S-AdoMet</note>
    </ligand>
</feature>
<feature type="binding site" evidence="1">
    <location>
        <position position="131"/>
    </location>
    <ligand>
        <name>[4Fe-4S] cluster</name>
        <dbReference type="ChEBI" id="CHEBI:49883"/>
        <note>4Fe-4S-S-AdoMet</note>
    </ligand>
</feature>
<feature type="binding site" evidence="1">
    <location>
        <position position="134"/>
    </location>
    <ligand>
        <name>[4Fe-4S] cluster</name>
        <dbReference type="ChEBI" id="CHEBI:49883"/>
        <note>4Fe-4S-S-AdoMet</note>
    </ligand>
</feature>
<feature type="binding site" evidence="1">
    <location>
        <begin position="177"/>
        <end position="178"/>
    </location>
    <ligand>
        <name>S-adenosyl-L-methionine</name>
        <dbReference type="ChEBI" id="CHEBI:59789"/>
    </ligand>
</feature>
<feature type="binding site" evidence="1">
    <location>
        <position position="209"/>
    </location>
    <ligand>
        <name>S-adenosyl-L-methionine</name>
        <dbReference type="ChEBI" id="CHEBI:59789"/>
    </ligand>
</feature>
<feature type="binding site" evidence="1">
    <location>
        <begin position="232"/>
        <end position="234"/>
    </location>
    <ligand>
        <name>S-adenosyl-L-methionine</name>
        <dbReference type="ChEBI" id="CHEBI:59789"/>
    </ligand>
</feature>
<feature type="binding site" evidence="1">
    <location>
        <position position="308"/>
    </location>
    <ligand>
        <name>S-adenosyl-L-methionine</name>
        <dbReference type="ChEBI" id="CHEBI:59789"/>
    </ligand>
</feature>
<feature type="disulfide bond" description="(transient)" evidence="1">
    <location>
        <begin position="120"/>
        <end position="351"/>
    </location>
</feature>
<organism>
    <name type="scientific">Staphylococcus aureus (strain MW2)</name>
    <dbReference type="NCBI Taxonomy" id="196620"/>
    <lineage>
        <taxon>Bacteria</taxon>
        <taxon>Bacillati</taxon>
        <taxon>Bacillota</taxon>
        <taxon>Bacilli</taxon>
        <taxon>Bacillales</taxon>
        <taxon>Staphylococcaceae</taxon>
        <taxon>Staphylococcus</taxon>
    </lineage>
</organism>
<proteinExistence type="inferred from homology"/>
<protein>
    <recommendedName>
        <fullName evidence="1">Probable dual-specificity RNA methyltransferase RlmN</fullName>
        <ecNumber evidence="1">2.1.1.192</ecNumber>
    </recommendedName>
    <alternativeName>
        <fullName evidence="1">23S rRNA (adenine(2503)-C(2))-methyltransferase</fullName>
    </alternativeName>
    <alternativeName>
        <fullName evidence="1">23S rRNA m2A2503 methyltransferase</fullName>
    </alternativeName>
    <alternativeName>
        <fullName evidence="1">Ribosomal RNA large subunit methyltransferase N</fullName>
    </alternativeName>
    <alternativeName>
        <fullName evidence="1">tRNA (adenine(37)-C(2))-methyltransferase</fullName>
    </alternativeName>
    <alternativeName>
        <fullName evidence="1">tRNA m2A37 methyltransferase</fullName>
    </alternativeName>
</protein>
<reference key="1">
    <citation type="journal article" date="2002" name="Lancet">
        <title>Genome and virulence determinants of high virulence community-acquired MRSA.</title>
        <authorList>
            <person name="Baba T."/>
            <person name="Takeuchi F."/>
            <person name="Kuroda M."/>
            <person name="Yuzawa H."/>
            <person name="Aoki K."/>
            <person name="Oguchi A."/>
            <person name="Nagai Y."/>
            <person name="Iwama N."/>
            <person name="Asano K."/>
            <person name="Naimi T."/>
            <person name="Kuroda H."/>
            <person name="Cui L."/>
            <person name="Yamamoto K."/>
            <person name="Hiramatsu K."/>
        </authorList>
    </citation>
    <scope>NUCLEOTIDE SEQUENCE [LARGE SCALE GENOMIC DNA]</scope>
    <source>
        <strain>MW2</strain>
    </source>
</reference>
<dbReference type="EC" id="2.1.1.192" evidence="1"/>
<dbReference type="EMBL" id="BA000033">
    <property type="protein sequence ID" value="BAB94966.1"/>
    <property type="molecule type" value="Genomic_DNA"/>
</dbReference>
<dbReference type="RefSeq" id="WP_000626905.1">
    <property type="nucleotide sequence ID" value="NC_003923.1"/>
</dbReference>
<dbReference type="SMR" id="Q8NX16"/>
<dbReference type="KEGG" id="sam:MW1101"/>
<dbReference type="HOGENOM" id="CLU_029101_0_1_9"/>
<dbReference type="GO" id="GO:0005737">
    <property type="term" value="C:cytoplasm"/>
    <property type="evidence" value="ECO:0007669"/>
    <property type="project" value="UniProtKB-SubCell"/>
</dbReference>
<dbReference type="GO" id="GO:0051539">
    <property type="term" value="F:4 iron, 4 sulfur cluster binding"/>
    <property type="evidence" value="ECO:0007669"/>
    <property type="project" value="UniProtKB-UniRule"/>
</dbReference>
<dbReference type="GO" id="GO:0046872">
    <property type="term" value="F:metal ion binding"/>
    <property type="evidence" value="ECO:0007669"/>
    <property type="project" value="UniProtKB-KW"/>
</dbReference>
<dbReference type="GO" id="GO:0070040">
    <property type="term" value="F:rRNA (adenine(2503)-C2-)-methyltransferase activity"/>
    <property type="evidence" value="ECO:0007669"/>
    <property type="project" value="UniProtKB-UniRule"/>
</dbReference>
<dbReference type="GO" id="GO:0019843">
    <property type="term" value="F:rRNA binding"/>
    <property type="evidence" value="ECO:0007669"/>
    <property type="project" value="UniProtKB-UniRule"/>
</dbReference>
<dbReference type="GO" id="GO:0002935">
    <property type="term" value="F:tRNA (adenine(37)-C2)-methyltransferase activity"/>
    <property type="evidence" value="ECO:0007669"/>
    <property type="project" value="UniProtKB-UniRule"/>
</dbReference>
<dbReference type="GO" id="GO:0000049">
    <property type="term" value="F:tRNA binding"/>
    <property type="evidence" value="ECO:0007669"/>
    <property type="project" value="UniProtKB-UniRule"/>
</dbReference>
<dbReference type="GO" id="GO:0046677">
    <property type="term" value="P:response to antibiotic"/>
    <property type="evidence" value="ECO:0007669"/>
    <property type="project" value="UniProtKB-KW"/>
</dbReference>
<dbReference type="GO" id="GO:0070475">
    <property type="term" value="P:rRNA base methylation"/>
    <property type="evidence" value="ECO:0007669"/>
    <property type="project" value="UniProtKB-UniRule"/>
</dbReference>
<dbReference type="GO" id="GO:0030488">
    <property type="term" value="P:tRNA methylation"/>
    <property type="evidence" value="ECO:0007669"/>
    <property type="project" value="UniProtKB-UniRule"/>
</dbReference>
<dbReference type="CDD" id="cd01335">
    <property type="entry name" value="Radical_SAM"/>
    <property type="match status" value="1"/>
</dbReference>
<dbReference type="FunFam" id="1.10.150.530:FF:000002">
    <property type="entry name" value="Probable dual-specificity RNA methyltransferase RlmN"/>
    <property type="match status" value="1"/>
</dbReference>
<dbReference type="FunFam" id="3.20.20.70:FF:000014">
    <property type="entry name" value="Probable dual-specificity RNA methyltransferase RlmN"/>
    <property type="match status" value="1"/>
</dbReference>
<dbReference type="Gene3D" id="1.10.150.530">
    <property type="match status" value="1"/>
</dbReference>
<dbReference type="Gene3D" id="3.20.20.70">
    <property type="entry name" value="Aldolase class I"/>
    <property type="match status" value="1"/>
</dbReference>
<dbReference type="HAMAP" id="MF_01849">
    <property type="entry name" value="RNA_methyltr_RlmN"/>
    <property type="match status" value="1"/>
</dbReference>
<dbReference type="InterPro" id="IPR013785">
    <property type="entry name" value="Aldolase_TIM"/>
</dbReference>
<dbReference type="InterPro" id="IPR040072">
    <property type="entry name" value="Methyltransferase_A"/>
</dbReference>
<dbReference type="InterPro" id="IPR048641">
    <property type="entry name" value="RlmN_N"/>
</dbReference>
<dbReference type="InterPro" id="IPR027492">
    <property type="entry name" value="RNA_MTrfase_RlmN"/>
</dbReference>
<dbReference type="InterPro" id="IPR004383">
    <property type="entry name" value="rRNA_lsu_MTrfase_RlmN/Cfr"/>
</dbReference>
<dbReference type="InterPro" id="IPR007197">
    <property type="entry name" value="rSAM"/>
</dbReference>
<dbReference type="NCBIfam" id="TIGR00048">
    <property type="entry name" value="rRNA_mod_RlmN"/>
    <property type="match status" value="1"/>
</dbReference>
<dbReference type="PANTHER" id="PTHR30544">
    <property type="entry name" value="23S RRNA METHYLTRANSFERASE"/>
    <property type="match status" value="1"/>
</dbReference>
<dbReference type="PANTHER" id="PTHR30544:SF5">
    <property type="entry name" value="RADICAL SAM CORE DOMAIN-CONTAINING PROTEIN"/>
    <property type="match status" value="1"/>
</dbReference>
<dbReference type="Pfam" id="PF04055">
    <property type="entry name" value="Radical_SAM"/>
    <property type="match status" value="1"/>
</dbReference>
<dbReference type="Pfam" id="PF21016">
    <property type="entry name" value="RlmN_N"/>
    <property type="match status" value="1"/>
</dbReference>
<dbReference type="PIRSF" id="PIRSF006004">
    <property type="entry name" value="CHP00048"/>
    <property type="match status" value="1"/>
</dbReference>
<dbReference type="SFLD" id="SFLDF00275">
    <property type="entry name" value="adenosine_C2_methyltransferase"/>
    <property type="match status" value="1"/>
</dbReference>
<dbReference type="SFLD" id="SFLDG01062">
    <property type="entry name" value="methyltransferase_(Class_A)"/>
    <property type="match status" value="1"/>
</dbReference>
<dbReference type="SUPFAM" id="SSF102114">
    <property type="entry name" value="Radical SAM enzymes"/>
    <property type="match status" value="1"/>
</dbReference>
<dbReference type="PROSITE" id="PS51918">
    <property type="entry name" value="RADICAL_SAM"/>
    <property type="match status" value="1"/>
</dbReference>
<evidence type="ECO:0000255" key="1">
    <source>
        <dbReference type="HAMAP-Rule" id="MF_01849"/>
    </source>
</evidence>
<evidence type="ECO:0000255" key="2">
    <source>
        <dbReference type="PROSITE-ProRule" id="PRU01266"/>
    </source>
</evidence>
<keyword id="KW-0004">4Fe-4S</keyword>
<keyword id="KW-0046">Antibiotic resistance</keyword>
<keyword id="KW-0963">Cytoplasm</keyword>
<keyword id="KW-1015">Disulfide bond</keyword>
<keyword id="KW-0408">Iron</keyword>
<keyword id="KW-0411">Iron-sulfur</keyword>
<keyword id="KW-0479">Metal-binding</keyword>
<keyword id="KW-0489">Methyltransferase</keyword>
<keyword id="KW-0698">rRNA processing</keyword>
<keyword id="KW-0949">S-adenosyl-L-methionine</keyword>
<keyword id="KW-0808">Transferase</keyword>
<keyword id="KW-0819">tRNA processing</keyword>
<sequence>MITAEKKKKNKFLPNFDKQSIYSLRFDEMQNWLVEQGQQKFRAKQIFEWLYQKRVDSIDEMTNLSKDLRQLLKDNFTVTTLTTVVKQESKDGTIKFLYELQDGYTIETVLMRHDYGNSVCVTTQVGCRIGCTFCASTLGGLKRNLEAGEIVSQVLTVQKALDATEERVSQIVIMGIGEPFENYDEMMDFLRIVNDDNSLNIGARHITVSTSGIIPRIYDFADEDIQINFAVSLHAAKDEVRSRLMPINRAYNVEKLIEAIQYYQEKTNRRVTFEYGLFGGVNDQLEHARELAHLIKGLNCHVNLIPVNHVPERNYVKTAKNDIFKFEKELKRLGINATIRREQGSDIDAACGQLRAKERQVETR</sequence>